<dbReference type="EMBL" id="CP001083">
    <property type="protein sequence ID" value="ACQ53369.1"/>
    <property type="molecule type" value="Genomic_DNA"/>
</dbReference>
<dbReference type="RefSeq" id="WP_003361811.1">
    <property type="nucleotide sequence ID" value="NC_012658.1"/>
</dbReference>
<dbReference type="SMR" id="C3KWI0"/>
<dbReference type="KEGG" id="cbi:CLJ_B3967"/>
<dbReference type="HOGENOM" id="CLU_113441_5_1_9"/>
<dbReference type="Proteomes" id="UP000002333">
    <property type="component" value="Chromosome"/>
</dbReference>
<dbReference type="GO" id="GO:0005737">
    <property type="term" value="C:cytoplasm"/>
    <property type="evidence" value="ECO:0007669"/>
    <property type="project" value="UniProtKB-ARBA"/>
</dbReference>
<dbReference type="GO" id="GO:1990904">
    <property type="term" value="C:ribonucleoprotein complex"/>
    <property type="evidence" value="ECO:0007669"/>
    <property type="project" value="UniProtKB-KW"/>
</dbReference>
<dbReference type="GO" id="GO:0005840">
    <property type="term" value="C:ribosome"/>
    <property type="evidence" value="ECO:0007669"/>
    <property type="project" value="UniProtKB-KW"/>
</dbReference>
<dbReference type="GO" id="GO:0070181">
    <property type="term" value="F:small ribosomal subunit rRNA binding"/>
    <property type="evidence" value="ECO:0007669"/>
    <property type="project" value="TreeGrafter"/>
</dbReference>
<dbReference type="GO" id="GO:0003735">
    <property type="term" value="F:structural constituent of ribosome"/>
    <property type="evidence" value="ECO:0007669"/>
    <property type="project" value="InterPro"/>
</dbReference>
<dbReference type="GO" id="GO:0006412">
    <property type="term" value="P:translation"/>
    <property type="evidence" value="ECO:0007669"/>
    <property type="project" value="UniProtKB-UniRule"/>
</dbReference>
<dbReference type="CDD" id="cd00473">
    <property type="entry name" value="bS6"/>
    <property type="match status" value="1"/>
</dbReference>
<dbReference type="FunFam" id="3.30.70.60:FF:000002">
    <property type="entry name" value="30S ribosomal protein S6"/>
    <property type="match status" value="1"/>
</dbReference>
<dbReference type="Gene3D" id="3.30.70.60">
    <property type="match status" value="1"/>
</dbReference>
<dbReference type="HAMAP" id="MF_00360">
    <property type="entry name" value="Ribosomal_bS6"/>
    <property type="match status" value="1"/>
</dbReference>
<dbReference type="InterPro" id="IPR000529">
    <property type="entry name" value="Ribosomal_bS6"/>
</dbReference>
<dbReference type="InterPro" id="IPR035980">
    <property type="entry name" value="Ribosomal_bS6_sf"/>
</dbReference>
<dbReference type="InterPro" id="IPR020814">
    <property type="entry name" value="Ribosomal_S6_plastid/chlpt"/>
</dbReference>
<dbReference type="InterPro" id="IPR014717">
    <property type="entry name" value="Transl_elong_EF1B/ribsomal_bS6"/>
</dbReference>
<dbReference type="NCBIfam" id="TIGR00166">
    <property type="entry name" value="S6"/>
    <property type="match status" value="1"/>
</dbReference>
<dbReference type="PANTHER" id="PTHR21011">
    <property type="entry name" value="MITOCHONDRIAL 28S RIBOSOMAL PROTEIN S6"/>
    <property type="match status" value="1"/>
</dbReference>
<dbReference type="PANTHER" id="PTHR21011:SF1">
    <property type="entry name" value="SMALL RIBOSOMAL SUBUNIT PROTEIN BS6M"/>
    <property type="match status" value="1"/>
</dbReference>
<dbReference type="Pfam" id="PF01250">
    <property type="entry name" value="Ribosomal_S6"/>
    <property type="match status" value="1"/>
</dbReference>
<dbReference type="SUPFAM" id="SSF54995">
    <property type="entry name" value="Ribosomal protein S6"/>
    <property type="match status" value="1"/>
</dbReference>
<name>RS6_CLOB6</name>
<accession>C3KWI0</accession>
<comment type="function">
    <text evidence="1">Binds together with bS18 to 16S ribosomal RNA.</text>
</comment>
<comment type="similarity">
    <text evidence="1">Belongs to the bacterial ribosomal protein bS6 family.</text>
</comment>
<keyword id="KW-0687">Ribonucleoprotein</keyword>
<keyword id="KW-0689">Ribosomal protein</keyword>
<keyword id="KW-0694">RNA-binding</keyword>
<keyword id="KW-0699">rRNA-binding</keyword>
<gene>
    <name evidence="1" type="primary">rpsF</name>
    <name type="ordered locus">CLJ_B3967</name>
</gene>
<reference key="1">
    <citation type="submission" date="2008-05" db="EMBL/GenBank/DDBJ databases">
        <title>Genome sequence of Clostridium botulinum Ba4 strain 657.</title>
        <authorList>
            <person name="Shrivastava S."/>
            <person name="Brown J.L."/>
            <person name="Bruce D."/>
            <person name="Detter C."/>
            <person name="Munk C."/>
            <person name="Smith L.A."/>
            <person name="Smith T.J."/>
            <person name="Sutton G."/>
            <person name="Brettin T.S."/>
        </authorList>
    </citation>
    <scope>NUCLEOTIDE SEQUENCE [LARGE SCALE GENOMIC DNA]</scope>
    <source>
        <strain>657 / Type Ba4</strain>
    </source>
</reference>
<feature type="chain" id="PRO_1000205390" description="Small ribosomal subunit protein bS6">
    <location>
        <begin position="1"/>
        <end position="94"/>
    </location>
</feature>
<protein>
    <recommendedName>
        <fullName evidence="1">Small ribosomal subunit protein bS6</fullName>
    </recommendedName>
    <alternativeName>
        <fullName evidence="2">30S ribosomal protein S6</fullName>
    </alternativeName>
</protein>
<evidence type="ECO:0000255" key="1">
    <source>
        <dbReference type="HAMAP-Rule" id="MF_00360"/>
    </source>
</evidence>
<evidence type="ECO:0000305" key="2"/>
<proteinExistence type="inferred from homology"/>
<sequence>MRKYETVFILNPALDEEGYKANVEKFKSVIENAGGTVDNVDLWGKRKLAYEVKKVSEGYYTLMNFTADTELPKELDRVFRITDTVIRHMIITQE</sequence>
<organism>
    <name type="scientific">Clostridium botulinum (strain 657 / Type Ba4)</name>
    <dbReference type="NCBI Taxonomy" id="515621"/>
    <lineage>
        <taxon>Bacteria</taxon>
        <taxon>Bacillati</taxon>
        <taxon>Bacillota</taxon>
        <taxon>Clostridia</taxon>
        <taxon>Eubacteriales</taxon>
        <taxon>Clostridiaceae</taxon>
        <taxon>Clostridium</taxon>
    </lineage>
</organism>